<name>YABA_LACCB</name>
<gene>
    <name evidence="1" type="primary">yabA</name>
    <name type="ordered locus">LCABL_24380</name>
</gene>
<evidence type="ECO:0000255" key="1">
    <source>
        <dbReference type="HAMAP-Rule" id="MF_01159"/>
    </source>
</evidence>
<comment type="function">
    <text evidence="1">Involved in control of chromosome replication initiation. Inhibits the cooperative binding of DnaA to the oriC region, thus negatively regulating initiation of chromosome replication. Inhibits the ability of DnaA-ATP to form a helix on DNA; does not disassemble preformed DnaA-DNA helices. Decreases the residence time of DnaA on the chromosome at its binding sites (oriC, replication forks and promoter-binding sites). Tethers DnaA to the replication machinery via the DNA polymerase beta sliding clamp subunit (dnaN). Associates with oriC and other DnaA targets on the chromosome in a DnaA-dependent manner.</text>
</comment>
<comment type="cofactor">
    <cofactor evidence="1">
        <name>Zn(2+)</name>
        <dbReference type="ChEBI" id="CHEBI:29105"/>
    </cofactor>
    <text evidence="1">Binds 1 zinc ion per subunit.</text>
</comment>
<comment type="subunit">
    <text evidence="1">Homotetramer. Interacts with both DnaA and DnaN, acting as a bridge between these two proteins.</text>
</comment>
<comment type="subcellular location">
    <subcellularLocation>
        <location evidence="1">Cytoplasm</location>
        <location evidence="1">Nucleoid</location>
    </subcellularLocation>
    <text evidence="1">Localizes in tight foci, which correspond to the replisome at mid-cell throughout the cell cycle.</text>
</comment>
<comment type="similarity">
    <text evidence="1">Belongs to the YabA family.</text>
</comment>
<sequence>MEKKELYDGFLTLEKHAQQMLREIAAMKDDMAETLERNAELEIENKHLRQHLAELEKDDNKTSDGGVELSKSKQNLESLYNEGFHVCPMFYGQRRVNDEPCAFCTEIIYGEN</sequence>
<dbReference type="EMBL" id="FM177140">
    <property type="protein sequence ID" value="CAQ67504.1"/>
    <property type="molecule type" value="Genomic_DNA"/>
</dbReference>
<dbReference type="SMR" id="B3W9Y5"/>
<dbReference type="DNASU" id="6407133"/>
<dbReference type="KEGG" id="lcb:LCABL_24380"/>
<dbReference type="HOGENOM" id="CLU_157169_0_0_9"/>
<dbReference type="GO" id="GO:0009295">
    <property type="term" value="C:nucleoid"/>
    <property type="evidence" value="ECO:0007669"/>
    <property type="project" value="UniProtKB-SubCell"/>
</dbReference>
<dbReference type="GO" id="GO:0006260">
    <property type="term" value="P:DNA replication"/>
    <property type="evidence" value="ECO:0007669"/>
    <property type="project" value="UniProtKB-UniRule"/>
</dbReference>
<dbReference type="HAMAP" id="MF_01159">
    <property type="entry name" value="YabA"/>
    <property type="match status" value="1"/>
</dbReference>
<dbReference type="InterPro" id="IPR010377">
    <property type="entry name" value="YabA"/>
</dbReference>
<dbReference type="Pfam" id="PF06156">
    <property type="entry name" value="YabA"/>
    <property type="match status" value="1"/>
</dbReference>
<dbReference type="PIRSF" id="PIRSF021439">
    <property type="entry name" value="DUF972"/>
    <property type="match status" value="1"/>
</dbReference>
<protein>
    <recommendedName>
        <fullName evidence="1">Replication initiation control protein YabA</fullName>
    </recommendedName>
</protein>
<reference key="1">
    <citation type="submission" date="2008-06" db="EMBL/GenBank/DDBJ databases">
        <title>Lactobacillus casei BL23 complete genome sequence.</title>
        <authorList>
            <person name="Maze A."/>
            <person name="Boel G."/>
            <person name="Bourand A."/>
            <person name="Loux V."/>
            <person name="Gibrat J.F."/>
            <person name="Zuniga M."/>
            <person name="Hartke A."/>
            <person name="Deutscher J."/>
        </authorList>
    </citation>
    <scope>NUCLEOTIDE SEQUENCE [LARGE SCALE GENOMIC DNA]</scope>
    <source>
        <strain>BL23</strain>
    </source>
</reference>
<feature type="chain" id="PRO_1000137834" description="Replication initiation control protein YabA">
    <location>
        <begin position="1"/>
        <end position="112"/>
    </location>
</feature>
<feature type="binding site" evidence="1">
    <location>
        <position position="85"/>
    </location>
    <ligand>
        <name>Zn(2+)</name>
        <dbReference type="ChEBI" id="CHEBI:29105"/>
    </ligand>
</feature>
<feature type="binding site" evidence="1">
    <location>
        <position position="87"/>
    </location>
    <ligand>
        <name>Zn(2+)</name>
        <dbReference type="ChEBI" id="CHEBI:29105"/>
    </ligand>
</feature>
<feature type="binding site" evidence="1">
    <location>
        <position position="101"/>
    </location>
    <ligand>
        <name>Zn(2+)</name>
        <dbReference type="ChEBI" id="CHEBI:29105"/>
    </ligand>
</feature>
<feature type="binding site" evidence="1">
    <location>
        <position position="104"/>
    </location>
    <ligand>
        <name>Zn(2+)</name>
        <dbReference type="ChEBI" id="CHEBI:29105"/>
    </ligand>
</feature>
<keyword id="KW-0963">Cytoplasm</keyword>
<keyword id="KW-0235">DNA replication</keyword>
<keyword id="KW-0236">DNA replication inhibitor</keyword>
<keyword id="KW-0479">Metal-binding</keyword>
<keyword id="KW-0862">Zinc</keyword>
<proteinExistence type="inferred from homology"/>
<organism>
    <name type="scientific">Lacticaseibacillus casei (strain BL23)</name>
    <name type="common">Lactobacillus casei</name>
    <dbReference type="NCBI Taxonomy" id="543734"/>
    <lineage>
        <taxon>Bacteria</taxon>
        <taxon>Bacillati</taxon>
        <taxon>Bacillota</taxon>
        <taxon>Bacilli</taxon>
        <taxon>Lactobacillales</taxon>
        <taxon>Lactobacillaceae</taxon>
        <taxon>Lacticaseibacillus</taxon>
    </lineage>
</organism>
<accession>B3W9Y5</accession>